<gene>
    <name type="primary">fliL</name>
    <name type="synonym">cheC1</name>
    <name type="synonym">fla AI</name>
    <name type="synonym">fla QI</name>
    <name type="ordered locus">b1944</name>
    <name type="ordered locus">JW1928</name>
</gene>
<organism>
    <name type="scientific">Escherichia coli (strain K12)</name>
    <dbReference type="NCBI Taxonomy" id="83333"/>
    <lineage>
        <taxon>Bacteria</taxon>
        <taxon>Pseudomonadati</taxon>
        <taxon>Pseudomonadota</taxon>
        <taxon>Gammaproteobacteria</taxon>
        <taxon>Enterobacterales</taxon>
        <taxon>Enterobacteriaceae</taxon>
        <taxon>Escherichia</taxon>
    </lineage>
</organism>
<feature type="chain" id="PRO_0000180914" description="Flagellar protein FliL">
    <location>
        <begin position="1"/>
        <end position="154"/>
    </location>
</feature>
<feature type="transmembrane region" description="Helical" evidence="1">
    <location>
        <begin position="13"/>
        <end position="35"/>
    </location>
</feature>
<accession>P0ABX8</accession>
<accession>P06973</accession>
<name>FLIL_ECOLI</name>
<reference key="1">
    <citation type="journal article" date="1986" name="J. Bacteriol.">
        <title>Sequence of the flaA (cheC) locus of Escherichia coli and discovery of a new gene.</title>
        <authorList>
            <person name="Kuo S.C."/>
            <person name="Koshland D.E. Jr."/>
        </authorList>
    </citation>
    <scope>NUCLEOTIDE SEQUENCE [GENOMIC DNA]</scope>
</reference>
<reference key="2">
    <citation type="journal article" date="1996" name="DNA Res.">
        <title>A 460-kb DNA sequence of the Escherichia coli K-12 genome corresponding to the 40.1-50.0 min region on the linkage map.</title>
        <authorList>
            <person name="Itoh T."/>
            <person name="Aiba H."/>
            <person name="Baba T."/>
            <person name="Fujita K."/>
            <person name="Hayashi K."/>
            <person name="Inada T."/>
            <person name="Isono K."/>
            <person name="Kasai H."/>
            <person name="Kimura S."/>
            <person name="Kitakawa M."/>
            <person name="Kitagawa M."/>
            <person name="Makino K."/>
            <person name="Miki T."/>
            <person name="Mizobuchi K."/>
            <person name="Mori H."/>
            <person name="Mori T."/>
            <person name="Motomura K."/>
            <person name="Nakade S."/>
            <person name="Nakamura Y."/>
            <person name="Nashimoto H."/>
            <person name="Nishio Y."/>
            <person name="Oshima T."/>
            <person name="Saito N."/>
            <person name="Sampei G."/>
            <person name="Seki Y."/>
            <person name="Sivasundaram S."/>
            <person name="Tagami H."/>
            <person name="Takeda J."/>
            <person name="Takemoto K."/>
            <person name="Wada C."/>
            <person name="Yamamoto Y."/>
            <person name="Horiuchi T."/>
        </authorList>
    </citation>
    <scope>NUCLEOTIDE SEQUENCE [LARGE SCALE GENOMIC DNA]</scope>
    <source>
        <strain>K12 / W3110 / ATCC 27325 / DSM 5911</strain>
    </source>
</reference>
<reference key="3">
    <citation type="journal article" date="1997" name="Science">
        <title>The complete genome sequence of Escherichia coli K-12.</title>
        <authorList>
            <person name="Blattner F.R."/>
            <person name="Plunkett G. III"/>
            <person name="Bloch C.A."/>
            <person name="Perna N.T."/>
            <person name="Burland V."/>
            <person name="Riley M."/>
            <person name="Collado-Vides J."/>
            <person name="Glasner J.D."/>
            <person name="Rode C.K."/>
            <person name="Mayhew G.F."/>
            <person name="Gregor J."/>
            <person name="Davis N.W."/>
            <person name="Kirkpatrick H.A."/>
            <person name="Goeden M.A."/>
            <person name="Rose D.J."/>
            <person name="Mau B."/>
            <person name="Shao Y."/>
        </authorList>
    </citation>
    <scope>NUCLEOTIDE SEQUENCE [LARGE SCALE GENOMIC DNA]</scope>
    <source>
        <strain>K12 / MG1655 / ATCC 47076</strain>
    </source>
</reference>
<reference key="4">
    <citation type="journal article" date="2006" name="Mol. Syst. Biol.">
        <title>Highly accurate genome sequences of Escherichia coli K-12 strains MG1655 and W3110.</title>
        <authorList>
            <person name="Hayashi K."/>
            <person name="Morooka N."/>
            <person name="Yamamoto Y."/>
            <person name="Fujita K."/>
            <person name="Isono K."/>
            <person name="Choi S."/>
            <person name="Ohtsubo E."/>
            <person name="Baba T."/>
            <person name="Wanner B.L."/>
            <person name="Mori H."/>
            <person name="Horiuchi T."/>
        </authorList>
    </citation>
    <scope>NUCLEOTIDE SEQUENCE [LARGE SCALE GENOMIC DNA]</scope>
    <source>
        <strain>K12 / W3110 / ATCC 27325 / DSM 5911</strain>
    </source>
</reference>
<reference key="5">
    <citation type="journal article" date="1996" name="J. Bacteriol.">
        <title>Characterization of the flagellar hook length control protein fliK of Salmonella typhimurium and Escherichia coli.</title>
        <authorList>
            <person name="Kawagishi I."/>
            <person name="Homma M."/>
            <person name="Williams A.W."/>
            <person name="Macnab R.M."/>
        </authorList>
    </citation>
    <scope>NUCLEOTIDE SEQUENCE [GENOMIC DNA] OF 1-16</scope>
    <source>
        <strain>K12 / KS650</strain>
    </source>
</reference>
<comment type="function">
    <text>Controls the rotational direction of flagella during chemotaxis.</text>
</comment>
<comment type="subcellular location">
    <subcellularLocation>
        <location evidence="2">Cell inner membrane</location>
        <topology evidence="2">Single-pass membrane protein</topology>
    </subcellularLocation>
</comment>
<comment type="similarity">
    <text evidence="2">Belongs to the FliL family.</text>
</comment>
<evidence type="ECO:0000255" key="1"/>
<evidence type="ECO:0000305" key="2"/>
<keyword id="KW-0997">Cell inner membrane</keyword>
<keyword id="KW-1003">Cell membrane</keyword>
<keyword id="KW-0145">Chemotaxis</keyword>
<keyword id="KW-0283">Flagellar rotation</keyword>
<keyword id="KW-0472">Membrane</keyword>
<keyword id="KW-1185">Reference proteome</keyword>
<keyword id="KW-0812">Transmembrane</keyword>
<keyword id="KW-1133">Transmembrane helix</keyword>
<protein>
    <recommendedName>
        <fullName>Flagellar protein FliL</fullName>
    </recommendedName>
</protein>
<sequence>MTDYAISKKSKRSLWIPILVFITLAACASAGYSYWHSHQVAADDKAQQRVVPSPVFYALDTFTVNLGDADRVLYIGITLRLKDEATRSRLSEYLPEVRSRLLLLFSRQDAAVLATEEGKKNLIAEIKTTLSTPLVAGQPKQDVTDVLYTAFILR</sequence>
<dbReference type="EMBL" id="M12784">
    <property type="protein sequence ID" value="AAA23785.1"/>
    <property type="molecule type" value="Genomic_DNA"/>
</dbReference>
<dbReference type="EMBL" id="U00096">
    <property type="protein sequence ID" value="AAC75011.1"/>
    <property type="molecule type" value="Genomic_DNA"/>
</dbReference>
<dbReference type="EMBL" id="AP009048">
    <property type="protein sequence ID" value="BAA15769.1"/>
    <property type="molecule type" value="Genomic_DNA"/>
</dbReference>
<dbReference type="EMBL" id="L43491">
    <property type="protein sequence ID" value="AAB06633.1"/>
    <property type="molecule type" value="Genomic_DNA"/>
</dbReference>
<dbReference type="PIR" id="A29842">
    <property type="entry name" value="XMECF1"/>
</dbReference>
<dbReference type="RefSeq" id="NP_416454.1">
    <property type="nucleotide sequence ID" value="NC_000913.3"/>
</dbReference>
<dbReference type="RefSeq" id="WP_000133106.1">
    <property type="nucleotide sequence ID" value="NZ_STEB01000050.1"/>
</dbReference>
<dbReference type="SMR" id="P0ABX8"/>
<dbReference type="BioGRID" id="4260390">
    <property type="interactions" value="544"/>
</dbReference>
<dbReference type="FunCoup" id="P0ABX8">
    <property type="interactions" value="51"/>
</dbReference>
<dbReference type="IntAct" id="P0ABX8">
    <property type="interactions" value="8"/>
</dbReference>
<dbReference type="STRING" id="511145.b1944"/>
<dbReference type="PaxDb" id="511145-b1944"/>
<dbReference type="EnsemblBacteria" id="AAC75011">
    <property type="protein sequence ID" value="AAC75011"/>
    <property type="gene ID" value="b1944"/>
</dbReference>
<dbReference type="GeneID" id="75172063"/>
<dbReference type="GeneID" id="946443"/>
<dbReference type="KEGG" id="ecj:JW1928"/>
<dbReference type="KEGG" id="eco:b1944"/>
<dbReference type="KEGG" id="ecoc:C3026_11010"/>
<dbReference type="PATRIC" id="fig|1411691.4.peg.307"/>
<dbReference type="EchoBASE" id="EB0318"/>
<dbReference type="eggNOG" id="COG1580">
    <property type="taxonomic scope" value="Bacteria"/>
</dbReference>
<dbReference type="HOGENOM" id="CLU_099018_0_1_6"/>
<dbReference type="InParanoid" id="P0ABX8"/>
<dbReference type="OMA" id="YWRMQQH"/>
<dbReference type="OrthoDB" id="2087278at2"/>
<dbReference type="PhylomeDB" id="P0ABX8"/>
<dbReference type="BioCyc" id="EcoCyc:EG10322-MONOMER"/>
<dbReference type="PRO" id="PR:P0ABX8"/>
<dbReference type="Proteomes" id="UP000000625">
    <property type="component" value="Chromosome"/>
</dbReference>
<dbReference type="GO" id="GO:0009425">
    <property type="term" value="C:bacterial-type flagellum basal body"/>
    <property type="evidence" value="ECO:0007669"/>
    <property type="project" value="InterPro"/>
</dbReference>
<dbReference type="GO" id="GO:0005886">
    <property type="term" value="C:plasma membrane"/>
    <property type="evidence" value="ECO:0007669"/>
    <property type="project" value="UniProtKB-SubCell"/>
</dbReference>
<dbReference type="GO" id="GO:0042802">
    <property type="term" value="F:identical protein binding"/>
    <property type="evidence" value="ECO:0000314"/>
    <property type="project" value="EcoCyc"/>
</dbReference>
<dbReference type="GO" id="GO:0071978">
    <property type="term" value="P:bacterial-type flagellum-dependent swarming motility"/>
    <property type="evidence" value="ECO:0000315"/>
    <property type="project" value="EcoCyc"/>
</dbReference>
<dbReference type="GO" id="GO:0006935">
    <property type="term" value="P:chemotaxis"/>
    <property type="evidence" value="ECO:0007669"/>
    <property type="project" value="UniProtKB-KW"/>
</dbReference>
<dbReference type="InterPro" id="IPR005503">
    <property type="entry name" value="FliL"/>
</dbReference>
<dbReference type="NCBIfam" id="NF005435">
    <property type="entry name" value="PRK07021.1"/>
    <property type="match status" value="1"/>
</dbReference>
<dbReference type="PANTHER" id="PTHR35091">
    <property type="entry name" value="FLAGELLAR PROTEIN FLIL"/>
    <property type="match status" value="1"/>
</dbReference>
<dbReference type="PANTHER" id="PTHR35091:SF2">
    <property type="entry name" value="FLAGELLAR PROTEIN FLIL"/>
    <property type="match status" value="1"/>
</dbReference>
<dbReference type="Pfam" id="PF03748">
    <property type="entry name" value="FliL"/>
    <property type="match status" value="1"/>
</dbReference>
<proteinExistence type="inferred from homology"/>